<organism>
    <name type="scientific">Phaseolus vulgaris</name>
    <name type="common">Kidney bean</name>
    <name type="synonym">French bean</name>
    <dbReference type="NCBI Taxonomy" id="3885"/>
    <lineage>
        <taxon>Eukaryota</taxon>
        <taxon>Viridiplantae</taxon>
        <taxon>Streptophyta</taxon>
        <taxon>Embryophyta</taxon>
        <taxon>Tracheophyta</taxon>
        <taxon>Spermatophyta</taxon>
        <taxon>Magnoliopsida</taxon>
        <taxon>eudicotyledons</taxon>
        <taxon>Gunneridae</taxon>
        <taxon>Pentapetalae</taxon>
        <taxon>rosids</taxon>
        <taxon>fabids</taxon>
        <taxon>Fabales</taxon>
        <taxon>Fabaceae</taxon>
        <taxon>Papilionoideae</taxon>
        <taxon>50 kb inversion clade</taxon>
        <taxon>NPAAA clade</taxon>
        <taxon>indigoferoid/millettioid clade</taxon>
        <taxon>Phaseoleae</taxon>
        <taxon>Phaseolus</taxon>
    </lineage>
</organism>
<protein>
    <recommendedName>
        <fullName evidence="1">DNA-directed RNA polymerase subunit beta'</fullName>
        <ecNumber evidence="1">2.7.7.6</ecNumber>
    </recommendedName>
    <alternativeName>
        <fullName evidence="1">PEP</fullName>
    </alternativeName>
    <alternativeName>
        <fullName evidence="1">Plastid-encoded RNA polymerase subunit beta'</fullName>
        <shortName evidence="1">RNA polymerase subunit beta'</shortName>
    </alternativeName>
</protein>
<geneLocation type="chloroplast"/>
<gene>
    <name evidence="1" type="primary">rpoC1</name>
</gene>
<dbReference type="EC" id="2.7.7.6" evidence="1"/>
<dbReference type="EMBL" id="DQ886273">
    <property type="protein sequence ID" value="ABH88087.1"/>
    <property type="molecule type" value="Genomic_DNA"/>
</dbReference>
<dbReference type="EMBL" id="EU196765">
    <property type="protein sequence ID" value="ABW22781.1"/>
    <property type="molecule type" value="Genomic_DNA"/>
</dbReference>
<dbReference type="RefSeq" id="YP_001122807.1">
    <property type="nucleotide sequence ID" value="NC_009259.1"/>
</dbReference>
<dbReference type="SMR" id="A4GGA6"/>
<dbReference type="GeneID" id="4961811"/>
<dbReference type="KEGG" id="pvu:4961811"/>
<dbReference type="eggNOG" id="ENOG502QPYA">
    <property type="taxonomic scope" value="Eukaryota"/>
</dbReference>
<dbReference type="GO" id="GO:0009507">
    <property type="term" value="C:chloroplast"/>
    <property type="evidence" value="ECO:0007669"/>
    <property type="project" value="UniProtKB-SubCell"/>
</dbReference>
<dbReference type="GO" id="GO:0000428">
    <property type="term" value="C:DNA-directed RNA polymerase complex"/>
    <property type="evidence" value="ECO:0007669"/>
    <property type="project" value="UniProtKB-KW"/>
</dbReference>
<dbReference type="GO" id="GO:0005739">
    <property type="term" value="C:mitochondrion"/>
    <property type="evidence" value="ECO:0007669"/>
    <property type="project" value="GOC"/>
</dbReference>
<dbReference type="GO" id="GO:0003677">
    <property type="term" value="F:DNA binding"/>
    <property type="evidence" value="ECO:0007669"/>
    <property type="project" value="UniProtKB-UniRule"/>
</dbReference>
<dbReference type="GO" id="GO:0003899">
    <property type="term" value="F:DNA-directed RNA polymerase activity"/>
    <property type="evidence" value="ECO:0007669"/>
    <property type="project" value="UniProtKB-UniRule"/>
</dbReference>
<dbReference type="GO" id="GO:0000287">
    <property type="term" value="F:magnesium ion binding"/>
    <property type="evidence" value="ECO:0007669"/>
    <property type="project" value="UniProtKB-UniRule"/>
</dbReference>
<dbReference type="GO" id="GO:0008270">
    <property type="term" value="F:zinc ion binding"/>
    <property type="evidence" value="ECO:0007669"/>
    <property type="project" value="UniProtKB-UniRule"/>
</dbReference>
<dbReference type="GO" id="GO:0006351">
    <property type="term" value="P:DNA-templated transcription"/>
    <property type="evidence" value="ECO:0007669"/>
    <property type="project" value="UniProtKB-UniRule"/>
</dbReference>
<dbReference type="FunFam" id="4.10.860.120:FF:000007">
    <property type="entry name" value="DNA-directed RNA polymerase subunit gamma"/>
    <property type="match status" value="1"/>
</dbReference>
<dbReference type="Gene3D" id="1.10.40.90">
    <property type="match status" value="1"/>
</dbReference>
<dbReference type="Gene3D" id="2.40.40.20">
    <property type="match status" value="1"/>
</dbReference>
<dbReference type="Gene3D" id="4.10.860.120">
    <property type="entry name" value="RNA polymerase II, clamp domain"/>
    <property type="match status" value="1"/>
</dbReference>
<dbReference type="Gene3D" id="1.10.274.100">
    <property type="entry name" value="RNA polymerase Rpb1, domain 3"/>
    <property type="match status" value="1"/>
</dbReference>
<dbReference type="HAMAP" id="MF_01323">
    <property type="entry name" value="RNApol_bact_RpoC1"/>
    <property type="match status" value="1"/>
</dbReference>
<dbReference type="InterPro" id="IPR045867">
    <property type="entry name" value="DNA-dir_RpoC_beta_prime"/>
</dbReference>
<dbReference type="InterPro" id="IPR000722">
    <property type="entry name" value="RNA_pol_asu"/>
</dbReference>
<dbReference type="InterPro" id="IPR006592">
    <property type="entry name" value="RNA_pol_N"/>
</dbReference>
<dbReference type="InterPro" id="IPR007080">
    <property type="entry name" value="RNA_pol_Rpb1_1"/>
</dbReference>
<dbReference type="InterPro" id="IPR042102">
    <property type="entry name" value="RNA_pol_Rpb1_3_sf"/>
</dbReference>
<dbReference type="InterPro" id="IPR044893">
    <property type="entry name" value="RNA_pol_Rpb1_clamp_domain"/>
</dbReference>
<dbReference type="InterPro" id="IPR034678">
    <property type="entry name" value="RNApol_RpoC1"/>
</dbReference>
<dbReference type="PANTHER" id="PTHR19376">
    <property type="entry name" value="DNA-DIRECTED RNA POLYMERASE"/>
    <property type="match status" value="1"/>
</dbReference>
<dbReference type="PANTHER" id="PTHR19376:SF54">
    <property type="entry name" value="DNA-DIRECTED RNA POLYMERASE SUBUNIT BETA"/>
    <property type="match status" value="1"/>
</dbReference>
<dbReference type="Pfam" id="PF04997">
    <property type="entry name" value="RNA_pol_Rpb1_1"/>
    <property type="match status" value="1"/>
</dbReference>
<dbReference type="Pfam" id="PF00623">
    <property type="entry name" value="RNA_pol_Rpb1_2"/>
    <property type="match status" value="2"/>
</dbReference>
<dbReference type="SMART" id="SM00663">
    <property type="entry name" value="RPOLA_N"/>
    <property type="match status" value="1"/>
</dbReference>
<dbReference type="SUPFAM" id="SSF64484">
    <property type="entry name" value="beta and beta-prime subunits of DNA dependent RNA-polymerase"/>
    <property type="match status" value="1"/>
</dbReference>
<feature type="chain" id="PRO_0000353510" description="DNA-directed RNA polymerase subunit beta'">
    <location>
        <begin position="1"/>
        <end position="684"/>
    </location>
</feature>
<feature type="binding site" evidence="1">
    <location>
        <position position="69"/>
    </location>
    <ligand>
        <name>Zn(2+)</name>
        <dbReference type="ChEBI" id="CHEBI:29105"/>
    </ligand>
</feature>
<feature type="binding site" evidence="1">
    <location>
        <position position="71"/>
    </location>
    <ligand>
        <name>Zn(2+)</name>
        <dbReference type="ChEBI" id="CHEBI:29105"/>
    </ligand>
</feature>
<feature type="binding site" evidence="1">
    <location>
        <position position="87"/>
    </location>
    <ligand>
        <name>Zn(2+)</name>
        <dbReference type="ChEBI" id="CHEBI:29105"/>
    </ligand>
</feature>
<feature type="binding site" evidence="1">
    <location>
        <position position="90"/>
    </location>
    <ligand>
        <name>Zn(2+)</name>
        <dbReference type="ChEBI" id="CHEBI:29105"/>
    </ligand>
</feature>
<feature type="binding site" evidence="1">
    <location>
        <position position="491"/>
    </location>
    <ligand>
        <name>Mg(2+)</name>
        <dbReference type="ChEBI" id="CHEBI:18420"/>
    </ligand>
</feature>
<feature type="binding site" evidence="1">
    <location>
        <position position="493"/>
    </location>
    <ligand>
        <name>Mg(2+)</name>
        <dbReference type="ChEBI" id="CHEBI:18420"/>
    </ligand>
</feature>
<feature type="binding site" evidence="1">
    <location>
        <position position="495"/>
    </location>
    <ligand>
        <name>Mg(2+)</name>
        <dbReference type="ChEBI" id="CHEBI:18420"/>
    </ligand>
</feature>
<feature type="sequence conflict" description="In Ref. 2; ABW22781." evidence="2" ref="2">
    <original>V</original>
    <variation>F</variation>
    <location>
        <position position="145"/>
    </location>
</feature>
<sequence>MIDQYKHQQLRIGSVSPQQMSAWAKRILPNGEIVGEVTKPYTFHYKTNKPEKDGLFCERIFGPIKSGICACGNYRVIRDKKDDPKFCEQCGVEFIDSRIRRYQMGYIKLACLVTHAWYLKRLPSYIANLLDKPLKELESLVYGDVSFARPVVKKPTFLRLRGSFEYEIQSWKHSIPLFFTTRGFDIFRNREISSGAVAIREQLADLDLRIIMDYSLIEWKELGKEGSPDNENEWEDRKVGRRKNFLVRRIELAKHFIRTNIEPEWMVLCLLPVLPPELRPIIQVDGGKLMSSDINELYRRVIYRNNTLIDLLTTSRSTPGELVICQEKLVQEAVDTLLDNGIRGQPMRDGHNKVYKSFSDIIEGKEGRFRETLLGKRVDYSGRSVIIVGPSLSLHRCGLPGEIAIELFQTFLIRGLIRKHFASNIGIAKSKIRQKEPIVWEILQEVMQGHPVLLNRAPTLHRLGIQAFQPILVEGRAICLHPLVCKGFNADFDGDQMAVHVPLSLEAQAEARLLMFSHTNLLSPAIADPISVPTQDMLIGLYILTSGNRRGIYSNRYNPRNCRNLKNERIPNNNYKYTKKKEPFFCNSYDAIGAYQQKRITFDSPLWLRWRLDLRIISSREVPIEVHYESLGTYHEIYGHYLVVRSIKKQMRSIYIRTNVGHISFYREIEEAVQGFCRAYSYDI</sequence>
<evidence type="ECO:0000255" key="1">
    <source>
        <dbReference type="HAMAP-Rule" id="MF_01323"/>
    </source>
</evidence>
<evidence type="ECO:0000305" key="2"/>
<name>RPOC1_PHAVU</name>
<accession>A4GGA6</accession>
<accession>A8W811</accession>
<keyword id="KW-0150">Chloroplast</keyword>
<keyword id="KW-0240">DNA-directed RNA polymerase</keyword>
<keyword id="KW-0460">Magnesium</keyword>
<keyword id="KW-0479">Metal-binding</keyword>
<keyword id="KW-0548">Nucleotidyltransferase</keyword>
<keyword id="KW-0934">Plastid</keyword>
<keyword id="KW-0804">Transcription</keyword>
<keyword id="KW-0808">Transferase</keyword>
<keyword id="KW-0862">Zinc</keyword>
<comment type="function">
    <text evidence="1">DNA-dependent RNA polymerase catalyzes the transcription of DNA into RNA using the four ribonucleoside triphosphates as substrates.</text>
</comment>
<comment type="catalytic activity">
    <reaction evidence="1">
        <text>RNA(n) + a ribonucleoside 5'-triphosphate = RNA(n+1) + diphosphate</text>
        <dbReference type="Rhea" id="RHEA:21248"/>
        <dbReference type="Rhea" id="RHEA-COMP:14527"/>
        <dbReference type="Rhea" id="RHEA-COMP:17342"/>
        <dbReference type="ChEBI" id="CHEBI:33019"/>
        <dbReference type="ChEBI" id="CHEBI:61557"/>
        <dbReference type="ChEBI" id="CHEBI:140395"/>
        <dbReference type="EC" id="2.7.7.6"/>
    </reaction>
</comment>
<comment type="cofactor">
    <cofactor evidence="1">
        <name>Mg(2+)</name>
        <dbReference type="ChEBI" id="CHEBI:18420"/>
    </cofactor>
    <text evidence="1">Binds 1 Mg(2+) ion per subunit.</text>
</comment>
<comment type="cofactor">
    <cofactor evidence="1">
        <name>Zn(2+)</name>
        <dbReference type="ChEBI" id="CHEBI:29105"/>
    </cofactor>
    <text evidence="1">Binds 1 Zn(2+) ion per subunit.</text>
</comment>
<comment type="subunit">
    <text evidence="1">In plastids the minimal PEP RNA polymerase catalytic core is composed of four subunits: alpha, beta, beta', and beta''. When a (nuclear-encoded) sigma factor is associated with the core the holoenzyme is formed, which can initiate transcription.</text>
</comment>
<comment type="subcellular location">
    <subcellularLocation>
        <location evidence="1">Plastid</location>
        <location evidence="1">Chloroplast</location>
    </subcellularLocation>
</comment>
<comment type="similarity">
    <text evidence="1">Belongs to the RNA polymerase beta' chain family. RpoC1 subfamily.</text>
</comment>
<proteinExistence type="inferred from homology"/>
<reference key="1">
    <citation type="journal article" date="2007" name="BMC Genomics">
        <title>Rapid evolutionary change of common bean (Phaseolus vulgaris L) plastome, and the genomic diversification of legume chloroplasts.</title>
        <authorList>
            <person name="Guo X."/>
            <person name="Castillo-Ramirez S."/>
            <person name="Gonzalez V."/>
            <person name="Bustos P."/>
            <person name="Fernandez-Vazquez J.L."/>
            <person name="Santamaria R.I."/>
            <person name="Arellano J."/>
            <person name="Cevallos M.A."/>
            <person name="Davila G."/>
        </authorList>
    </citation>
    <scope>NUCLEOTIDE SEQUENCE [LARGE SCALE GENOMIC DNA]</scope>
    <source>
        <strain>cv. Negro Jamapa</strain>
    </source>
</reference>
<reference key="2">
    <citation type="submission" date="2007-10" db="EMBL/GenBank/DDBJ databases">
        <title>Complete nucleotide sequence of the plastid genome of the common bean, Phaseolus vulgaris.</title>
        <authorList>
            <person name="Moore M.J."/>
            <person name="Triplett E.W."/>
            <person name="Broughton W.J."/>
            <person name="Soltis P.S."/>
            <person name="Soltis D.E."/>
        </authorList>
    </citation>
    <scope>NUCLEOTIDE SEQUENCE [LARGE SCALE GENOMIC DNA]</scope>
</reference>